<gene>
    <name evidence="1" type="primary">minE</name>
    <name type="ordered locus">SynRCC307_0436</name>
</gene>
<name>MINE_SYNR3</name>
<accession>A5GR30</accession>
<proteinExistence type="inferred from homology"/>
<feature type="chain" id="PRO_1000047796" description="Cell division topological specificity factor">
    <location>
        <begin position="1"/>
        <end position="97"/>
    </location>
</feature>
<comment type="function">
    <text evidence="1">Prevents the cell division inhibition by proteins MinC and MinD at internal division sites while permitting inhibition at polar sites. This ensures cell division at the proper site by restricting the formation of a division septum at the midpoint of the long axis of the cell.</text>
</comment>
<comment type="similarity">
    <text evidence="1">Belongs to the MinE family.</text>
</comment>
<keyword id="KW-0131">Cell cycle</keyword>
<keyword id="KW-0132">Cell division</keyword>
<keyword id="KW-1185">Reference proteome</keyword>
<dbReference type="EMBL" id="CT978603">
    <property type="protein sequence ID" value="CAK27339.1"/>
    <property type="molecule type" value="Genomic_DNA"/>
</dbReference>
<dbReference type="SMR" id="A5GR30"/>
<dbReference type="STRING" id="316278.SynRCC307_0436"/>
<dbReference type="KEGG" id="syr:SynRCC307_0436"/>
<dbReference type="eggNOG" id="COG0851">
    <property type="taxonomic scope" value="Bacteria"/>
</dbReference>
<dbReference type="HOGENOM" id="CLU_137929_1_1_3"/>
<dbReference type="OrthoDB" id="9796578at2"/>
<dbReference type="Proteomes" id="UP000001115">
    <property type="component" value="Chromosome"/>
</dbReference>
<dbReference type="GO" id="GO:0051301">
    <property type="term" value="P:cell division"/>
    <property type="evidence" value="ECO:0007669"/>
    <property type="project" value="UniProtKB-KW"/>
</dbReference>
<dbReference type="GO" id="GO:0032955">
    <property type="term" value="P:regulation of division septum assembly"/>
    <property type="evidence" value="ECO:0007669"/>
    <property type="project" value="InterPro"/>
</dbReference>
<dbReference type="Gene3D" id="3.30.1070.10">
    <property type="entry name" value="Cell division topological specificity factor MinE"/>
    <property type="match status" value="1"/>
</dbReference>
<dbReference type="HAMAP" id="MF_00262">
    <property type="entry name" value="MinE"/>
    <property type="match status" value="1"/>
</dbReference>
<dbReference type="InterPro" id="IPR005527">
    <property type="entry name" value="MinE"/>
</dbReference>
<dbReference type="InterPro" id="IPR036707">
    <property type="entry name" value="MinE_sf"/>
</dbReference>
<dbReference type="NCBIfam" id="TIGR01215">
    <property type="entry name" value="minE"/>
    <property type="match status" value="1"/>
</dbReference>
<dbReference type="NCBIfam" id="NF001422">
    <property type="entry name" value="PRK00296.1"/>
    <property type="match status" value="1"/>
</dbReference>
<dbReference type="Pfam" id="PF03776">
    <property type="entry name" value="MinE"/>
    <property type="match status" value="1"/>
</dbReference>
<dbReference type="SUPFAM" id="SSF55229">
    <property type="entry name" value="Cell division protein MinE topological specificity domain"/>
    <property type="match status" value="1"/>
</dbReference>
<evidence type="ECO:0000255" key="1">
    <source>
        <dbReference type="HAMAP-Rule" id="MF_00262"/>
    </source>
</evidence>
<organism>
    <name type="scientific">Synechococcus sp. (strain RCC307)</name>
    <dbReference type="NCBI Taxonomy" id="316278"/>
    <lineage>
        <taxon>Bacteria</taxon>
        <taxon>Bacillati</taxon>
        <taxon>Cyanobacteriota</taxon>
        <taxon>Cyanophyceae</taxon>
        <taxon>Synechococcales</taxon>
        <taxon>Synechococcaceae</taxon>
        <taxon>Synechococcus</taxon>
    </lineage>
</organism>
<sequence>MTLREMIDRLLGRQQASATTAKHRLQLVLAHDRSDLNPDLMEQMRREILEVVNRYVELDLEGGDVSLETEERATALVANLPIRRVRDDVLPQVPAVQ</sequence>
<protein>
    <recommendedName>
        <fullName evidence="1">Cell division topological specificity factor</fullName>
    </recommendedName>
</protein>
<reference key="1">
    <citation type="submission" date="2006-05" db="EMBL/GenBank/DDBJ databases">
        <authorList>
            <consortium name="Genoscope"/>
        </authorList>
    </citation>
    <scope>NUCLEOTIDE SEQUENCE [LARGE SCALE GENOMIC DNA]</scope>
    <source>
        <strain>RCC307</strain>
    </source>
</reference>